<comment type="function">
    <text evidence="1">Catalyzes the reversible conversion of ribose-5-phosphate to ribulose 5-phosphate.</text>
</comment>
<comment type="catalytic activity">
    <reaction evidence="1">
        <text>aldehydo-D-ribose 5-phosphate = D-ribulose 5-phosphate</text>
        <dbReference type="Rhea" id="RHEA:14657"/>
        <dbReference type="ChEBI" id="CHEBI:58121"/>
        <dbReference type="ChEBI" id="CHEBI:58273"/>
        <dbReference type="EC" id="5.3.1.6"/>
    </reaction>
</comment>
<comment type="pathway">
    <text evidence="1">Carbohydrate degradation; pentose phosphate pathway; D-ribose 5-phosphate from D-ribulose 5-phosphate (non-oxidative stage): step 1/1.</text>
</comment>
<comment type="subunit">
    <text evidence="1">Homodimer.</text>
</comment>
<comment type="similarity">
    <text evidence="1">Belongs to the ribose 5-phosphate isomerase family.</text>
</comment>
<dbReference type="EC" id="5.3.1.6" evidence="1"/>
<dbReference type="EMBL" id="AE016828">
    <property type="protein sequence ID" value="AAO89596.1"/>
    <property type="molecule type" value="Genomic_DNA"/>
</dbReference>
<dbReference type="RefSeq" id="NP_819082.1">
    <property type="nucleotide sequence ID" value="NC_002971.4"/>
</dbReference>
<dbReference type="RefSeq" id="WP_005770348.1">
    <property type="nucleotide sequence ID" value="NZ_CDBG01000001.1"/>
</dbReference>
<dbReference type="SMR" id="Q83FB4"/>
<dbReference type="STRING" id="227377.CBU_0026"/>
<dbReference type="DNASU" id="1207888"/>
<dbReference type="EnsemblBacteria" id="AAO89596">
    <property type="protein sequence ID" value="AAO89596"/>
    <property type="gene ID" value="CBU_0026"/>
</dbReference>
<dbReference type="GeneID" id="1207888"/>
<dbReference type="KEGG" id="cbu:CBU_0026"/>
<dbReference type="PATRIC" id="fig|227377.7.peg.25"/>
<dbReference type="eggNOG" id="COG0120">
    <property type="taxonomic scope" value="Bacteria"/>
</dbReference>
<dbReference type="HOGENOM" id="CLU_056590_1_1_6"/>
<dbReference type="OrthoDB" id="5870696at2"/>
<dbReference type="UniPathway" id="UPA00115">
    <property type="reaction ID" value="UER00412"/>
</dbReference>
<dbReference type="Proteomes" id="UP000002671">
    <property type="component" value="Chromosome"/>
</dbReference>
<dbReference type="GO" id="GO:0005829">
    <property type="term" value="C:cytosol"/>
    <property type="evidence" value="ECO:0000318"/>
    <property type="project" value="GO_Central"/>
</dbReference>
<dbReference type="GO" id="GO:0004751">
    <property type="term" value="F:ribose-5-phosphate isomerase activity"/>
    <property type="evidence" value="ECO:0000318"/>
    <property type="project" value="GO_Central"/>
</dbReference>
<dbReference type="GO" id="GO:0006014">
    <property type="term" value="P:D-ribose metabolic process"/>
    <property type="evidence" value="ECO:0000318"/>
    <property type="project" value="GO_Central"/>
</dbReference>
<dbReference type="GO" id="GO:0009052">
    <property type="term" value="P:pentose-phosphate shunt, non-oxidative branch"/>
    <property type="evidence" value="ECO:0000318"/>
    <property type="project" value="GO_Central"/>
</dbReference>
<dbReference type="CDD" id="cd01398">
    <property type="entry name" value="RPI_A"/>
    <property type="match status" value="1"/>
</dbReference>
<dbReference type="FunFam" id="3.30.70.260:FF:000004">
    <property type="entry name" value="Ribose-5-phosphate isomerase A"/>
    <property type="match status" value="1"/>
</dbReference>
<dbReference type="FunFam" id="3.40.50.1360:FF:000001">
    <property type="entry name" value="Ribose-5-phosphate isomerase A"/>
    <property type="match status" value="1"/>
</dbReference>
<dbReference type="Gene3D" id="3.30.70.260">
    <property type="match status" value="1"/>
</dbReference>
<dbReference type="Gene3D" id="3.40.50.1360">
    <property type="match status" value="1"/>
</dbReference>
<dbReference type="HAMAP" id="MF_00170">
    <property type="entry name" value="Rib_5P_isom_A"/>
    <property type="match status" value="1"/>
</dbReference>
<dbReference type="InterPro" id="IPR037171">
    <property type="entry name" value="NagB/RpiA_transferase-like"/>
</dbReference>
<dbReference type="InterPro" id="IPR020672">
    <property type="entry name" value="Ribose5P_isomerase_typA_subgr"/>
</dbReference>
<dbReference type="InterPro" id="IPR004788">
    <property type="entry name" value="Ribose5P_isomerase_type_A"/>
</dbReference>
<dbReference type="NCBIfam" id="NF001924">
    <property type="entry name" value="PRK00702.1"/>
    <property type="match status" value="1"/>
</dbReference>
<dbReference type="NCBIfam" id="TIGR00021">
    <property type="entry name" value="rpiA"/>
    <property type="match status" value="1"/>
</dbReference>
<dbReference type="PANTHER" id="PTHR11934">
    <property type="entry name" value="RIBOSE-5-PHOSPHATE ISOMERASE"/>
    <property type="match status" value="1"/>
</dbReference>
<dbReference type="PANTHER" id="PTHR11934:SF0">
    <property type="entry name" value="RIBOSE-5-PHOSPHATE ISOMERASE"/>
    <property type="match status" value="1"/>
</dbReference>
<dbReference type="Pfam" id="PF06026">
    <property type="entry name" value="Rib_5-P_isom_A"/>
    <property type="match status" value="1"/>
</dbReference>
<dbReference type="SUPFAM" id="SSF75445">
    <property type="entry name" value="D-ribose-5-phosphate isomerase (RpiA), lid domain"/>
    <property type="match status" value="1"/>
</dbReference>
<dbReference type="SUPFAM" id="SSF100950">
    <property type="entry name" value="NagB/RpiA/CoA transferase-like"/>
    <property type="match status" value="1"/>
</dbReference>
<accession>Q83FB4</accession>
<reference key="1">
    <citation type="journal article" date="2003" name="Proc. Natl. Acad. Sci. U.S.A.">
        <title>Complete genome sequence of the Q-fever pathogen, Coxiella burnetii.</title>
        <authorList>
            <person name="Seshadri R."/>
            <person name="Paulsen I.T."/>
            <person name="Eisen J.A."/>
            <person name="Read T.D."/>
            <person name="Nelson K.E."/>
            <person name="Nelson W.C."/>
            <person name="Ward N.L."/>
            <person name="Tettelin H."/>
            <person name="Davidsen T.M."/>
            <person name="Beanan M.J."/>
            <person name="DeBoy R.T."/>
            <person name="Daugherty S.C."/>
            <person name="Brinkac L.M."/>
            <person name="Madupu R."/>
            <person name="Dodson R.J."/>
            <person name="Khouri H.M."/>
            <person name="Lee K.H."/>
            <person name="Carty H.A."/>
            <person name="Scanlan D."/>
            <person name="Heinzen R.A."/>
            <person name="Thompson H.A."/>
            <person name="Samuel J.E."/>
            <person name="Fraser C.M."/>
            <person name="Heidelberg J.F."/>
        </authorList>
    </citation>
    <scope>NUCLEOTIDE SEQUENCE [LARGE SCALE GENOMIC DNA]</scope>
    <source>
        <strain>RSA 493 / Nine Mile phase I</strain>
    </source>
</reference>
<keyword id="KW-0413">Isomerase</keyword>
<keyword id="KW-1185">Reference proteome</keyword>
<organism>
    <name type="scientific">Coxiella burnetii (strain RSA 493 / Nine Mile phase I)</name>
    <dbReference type="NCBI Taxonomy" id="227377"/>
    <lineage>
        <taxon>Bacteria</taxon>
        <taxon>Pseudomonadati</taxon>
        <taxon>Pseudomonadota</taxon>
        <taxon>Gammaproteobacteria</taxon>
        <taxon>Legionellales</taxon>
        <taxon>Coxiellaceae</taxon>
        <taxon>Coxiella</taxon>
    </lineage>
</organism>
<evidence type="ECO:0000255" key="1">
    <source>
        <dbReference type="HAMAP-Rule" id="MF_00170"/>
    </source>
</evidence>
<name>RPIA_COXBU</name>
<sequence>MSKNELKKAAAMEAIQFVKNVNIVGVGTGSTVNYFIDALAEIKHQIEGAVASSVATENRLKEHRIPVVDLNSVSNVDVYVDGADEFNKHFYLTKGGGGALTREKIIAAAAKRFICIVDESKQVDVLGQFPLPIEVIPMARSFVAREIVKLKGDPVYRQGFTTDNGNVILDIHNLTILNPVELEAILNNIPGVIANGLFAQQPADDLLIGTPAGVQLHHRK</sequence>
<protein>
    <recommendedName>
        <fullName evidence="1">Ribose-5-phosphate isomerase A</fullName>
        <ecNumber evidence="1">5.3.1.6</ecNumber>
    </recommendedName>
    <alternativeName>
        <fullName evidence="1">Phosphoriboisomerase A</fullName>
        <shortName evidence="1">PRI</shortName>
    </alternativeName>
</protein>
<proteinExistence type="inferred from homology"/>
<feature type="chain" id="PRO_0000158410" description="Ribose-5-phosphate isomerase A">
    <location>
        <begin position="1"/>
        <end position="220"/>
    </location>
</feature>
<feature type="active site" description="Proton acceptor" evidence="1">
    <location>
        <position position="103"/>
    </location>
</feature>
<feature type="binding site" evidence="1">
    <location>
        <begin position="28"/>
        <end position="31"/>
    </location>
    <ligand>
        <name>substrate</name>
    </ligand>
</feature>
<feature type="binding site" evidence="1">
    <location>
        <begin position="81"/>
        <end position="84"/>
    </location>
    <ligand>
        <name>substrate</name>
    </ligand>
</feature>
<feature type="binding site" evidence="1">
    <location>
        <begin position="94"/>
        <end position="97"/>
    </location>
    <ligand>
        <name>substrate</name>
    </ligand>
</feature>
<feature type="binding site" evidence="1">
    <location>
        <position position="121"/>
    </location>
    <ligand>
        <name>substrate</name>
    </ligand>
</feature>
<gene>
    <name evidence="1" type="primary">rpiA</name>
    <name type="ordered locus">CBU_0026</name>
</gene>